<feature type="initiator methionine" description="Removed" evidence="1">
    <location>
        <position position="1"/>
    </location>
</feature>
<feature type="chain" id="PRO_0000242642" description="Ubiquitin-like domain-containing CTD phosphatase 1">
    <location>
        <begin position="2"/>
        <end position="318"/>
    </location>
</feature>
<feature type="domain" description="Ubiquitin-like" evidence="3">
    <location>
        <begin position="3"/>
        <end position="81"/>
    </location>
</feature>
<feature type="domain" description="FCP1 homology" evidence="4">
    <location>
        <begin position="133"/>
        <end position="294"/>
    </location>
</feature>
<feature type="binding site" evidence="2">
    <location>
        <position position="143"/>
    </location>
    <ligand>
        <name>Mg(2+)</name>
        <dbReference type="ChEBI" id="CHEBI:18420"/>
    </ligand>
</feature>
<feature type="binding site" evidence="2">
    <location>
        <position position="145"/>
    </location>
    <ligand>
        <name>Mg(2+)</name>
        <dbReference type="ChEBI" id="CHEBI:18420"/>
    </ligand>
</feature>
<feature type="binding site" evidence="2">
    <location>
        <position position="253"/>
    </location>
    <ligand>
        <name>Mg(2+)</name>
        <dbReference type="ChEBI" id="CHEBI:18420"/>
    </ligand>
</feature>
<feature type="modified residue" description="N-acetylalanine" evidence="1">
    <location>
        <position position="2"/>
    </location>
</feature>
<feature type="modified residue" description="N6-acetyllysine" evidence="1">
    <location>
        <position position="117"/>
    </location>
</feature>
<evidence type="ECO:0000250" key="1">
    <source>
        <dbReference type="UniProtKB" id="Q8WVY7"/>
    </source>
</evidence>
<evidence type="ECO:0000250" key="2">
    <source>
        <dbReference type="UniProtKB" id="Q9XZ16"/>
    </source>
</evidence>
<evidence type="ECO:0000255" key="3">
    <source>
        <dbReference type="PROSITE-ProRule" id="PRU00214"/>
    </source>
</evidence>
<evidence type="ECO:0000255" key="4">
    <source>
        <dbReference type="PROSITE-ProRule" id="PRU00336"/>
    </source>
</evidence>
<dbReference type="EC" id="3.1.3.16" evidence="1"/>
<dbReference type="EMBL" id="CR861328">
    <property type="protein sequence ID" value="CAH93392.1"/>
    <property type="molecule type" value="mRNA"/>
</dbReference>
<dbReference type="RefSeq" id="NP_001126990.1">
    <property type="nucleotide sequence ID" value="NM_001133518.1"/>
</dbReference>
<dbReference type="BMRB" id="Q5R4C4"/>
<dbReference type="SMR" id="Q5R4C4"/>
<dbReference type="FunCoup" id="Q5R4C4">
    <property type="interactions" value="3597"/>
</dbReference>
<dbReference type="STRING" id="9601.ENSPPYP00000017904"/>
<dbReference type="GeneID" id="100174013"/>
<dbReference type="KEGG" id="pon:100174013"/>
<dbReference type="CTD" id="134510"/>
<dbReference type="eggNOG" id="KOG1605">
    <property type="taxonomic scope" value="Eukaryota"/>
</dbReference>
<dbReference type="eggNOG" id="KOG1872">
    <property type="taxonomic scope" value="Eukaryota"/>
</dbReference>
<dbReference type="InParanoid" id="Q5R4C4"/>
<dbReference type="OrthoDB" id="1711508at2759"/>
<dbReference type="Proteomes" id="UP000001595">
    <property type="component" value="Unplaced"/>
</dbReference>
<dbReference type="GO" id="GO:0005634">
    <property type="term" value="C:nucleus"/>
    <property type="evidence" value="ECO:0007669"/>
    <property type="project" value="UniProtKB-SubCell"/>
</dbReference>
<dbReference type="GO" id="GO:0046872">
    <property type="term" value="F:metal ion binding"/>
    <property type="evidence" value="ECO:0007669"/>
    <property type="project" value="UniProtKB-KW"/>
</dbReference>
<dbReference type="GO" id="GO:0004722">
    <property type="term" value="F:protein serine/threonine phosphatase activity"/>
    <property type="evidence" value="ECO:0007669"/>
    <property type="project" value="UniProtKB-EC"/>
</dbReference>
<dbReference type="GO" id="GO:0090364">
    <property type="term" value="P:regulation of proteasome assembly"/>
    <property type="evidence" value="ECO:0007669"/>
    <property type="project" value="InterPro"/>
</dbReference>
<dbReference type="CDD" id="cd01813">
    <property type="entry name" value="Ubl_UBLCP1"/>
    <property type="match status" value="1"/>
</dbReference>
<dbReference type="FunFam" id="3.40.50.1000:FF:000050">
    <property type="entry name" value="Ubiquitin-like domain-containing CTD phosphatase 1"/>
    <property type="match status" value="1"/>
</dbReference>
<dbReference type="FunFam" id="3.10.20.90:FF:000060">
    <property type="entry name" value="ubiquitin-like domain-containing CTD phosphatase 1"/>
    <property type="match status" value="1"/>
</dbReference>
<dbReference type="Gene3D" id="3.40.50.1000">
    <property type="entry name" value="HAD superfamily/HAD-like"/>
    <property type="match status" value="1"/>
</dbReference>
<dbReference type="Gene3D" id="3.10.20.90">
    <property type="entry name" value="Phosphatidylinositol 3-kinase Catalytic Subunit, Chain A, domain 1"/>
    <property type="match status" value="1"/>
</dbReference>
<dbReference type="InterPro" id="IPR004274">
    <property type="entry name" value="FCP1_dom"/>
</dbReference>
<dbReference type="InterPro" id="IPR036412">
    <property type="entry name" value="HAD-like_sf"/>
</dbReference>
<dbReference type="InterPro" id="IPR011943">
    <property type="entry name" value="HAD-SF_hydro_IIID"/>
</dbReference>
<dbReference type="InterPro" id="IPR023214">
    <property type="entry name" value="HAD_sf"/>
</dbReference>
<dbReference type="InterPro" id="IPR000626">
    <property type="entry name" value="Ubiquitin-like_dom"/>
</dbReference>
<dbReference type="InterPro" id="IPR029071">
    <property type="entry name" value="Ubiquitin-like_domsf"/>
</dbReference>
<dbReference type="InterPro" id="IPR051658">
    <property type="entry name" value="UBLCP1"/>
</dbReference>
<dbReference type="NCBIfam" id="TIGR02245">
    <property type="entry name" value="HAD_IIID1"/>
    <property type="match status" value="1"/>
</dbReference>
<dbReference type="PANTHER" id="PTHR48493">
    <property type="entry name" value="UBIQUITIN-LIKE DOMAIN-CONTAINING CTD PHOSPHATASE 1"/>
    <property type="match status" value="1"/>
</dbReference>
<dbReference type="PANTHER" id="PTHR48493:SF1">
    <property type="entry name" value="UBIQUITIN-LIKE DOMAIN-CONTAINING CTD PHOSPHATASE 1"/>
    <property type="match status" value="1"/>
</dbReference>
<dbReference type="Pfam" id="PF03031">
    <property type="entry name" value="NIF"/>
    <property type="match status" value="1"/>
</dbReference>
<dbReference type="Pfam" id="PF00240">
    <property type="entry name" value="ubiquitin"/>
    <property type="match status" value="1"/>
</dbReference>
<dbReference type="SMART" id="SM00577">
    <property type="entry name" value="CPDc"/>
    <property type="match status" value="1"/>
</dbReference>
<dbReference type="SMART" id="SM00213">
    <property type="entry name" value="UBQ"/>
    <property type="match status" value="1"/>
</dbReference>
<dbReference type="SUPFAM" id="SSF56784">
    <property type="entry name" value="HAD-like"/>
    <property type="match status" value="1"/>
</dbReference>
<dbReference type="SUPFAM" id="SSF54236">
    <property type="entry name" value="Ubiquitin-like"/>
    <property type="match status" value="1"/>
</dbReference>
<dbReference type="PROSITE" id="PS50969">
    <property type="entry name" value="FCP1"/>
    <property type="match status" value="1"/>
</dbReference>
<dbReference type="PROSITE" id="PS50053">
    <property type="entry name" value="UBIQUITIN_2"/>
    <property type="match status" value="1"/>
</dbReference>
<accession>Q5R4C4</accession>
<sequence>MALPIIVKWGGQEYSVTTLSEDDTVLDLKQFLKTLTGVLPERQKLLGLKVKGKPAENDVKLGALKLKPNTKIMMMGTREESLEDVLGPPPDNDDVVNDFDIEDEVVEVENREENLLKISRRVKEYKVEILNPPREGKKLLVLDVDYTLFDHRSCAETGVELMRPYLHEFLTSAYEDYDIVIWSATNMKWIEAKMKELGVSTNANYKITFMLDSAAMITVHTPRRGLIDVKPLGVIWGKFSEFYSKKNTIMFDDIGRNFLMNPQNGLKIRPFMKAHLNRDKDKGLLKLTQYLKEIAKLDDFLGLNHKYWERYLSKKQGQ</sequence>
<comment type="function">
    <text evidence="1">Dephosphorylates 26S nuclear proteasomes, thereby decreasing their proteolytic activity. Recruited to the 19S regulatory particle of the 26S proteasome through its interaction with 19S component PSMD2/RPN1. Once recruited, dephosphorylates 19S component PSMC2/RPT1 which impairs PSMC2 ATPase activity and disrupts 26S proteasome assembly. Has also been reported to stimulate the proteolytic activity of the 26S proteasome.</text>
</comment>
<comment type="catalytic activity">
    <reaction evidence="1">
        <text>O-phospho-L-seryl-[protein] + H2O = L-seryl-[protein] + phosphate</text>
        <dbReference type="Rhea" id="RHEA:20629"/>
        <dbReference type="Rhea" id="RHEA-COMP:9863"/>
        <dbReference type="Rhea" id="RHEA-COMP:11604"/>
        <dbReference type="ChEBI" id="CHEBI:15377"/>
        <dbReference type="ChEBI" id="CHEBI:29999"/>
        <dbReference type="ChEBI" id="CHEBI:43474"/>
        <dbReference type="ChEBI" id="CHEBI:83421"/>
        <dbReference type="EC" id="3.1.3.16"/>
    </reaction>
</comment>
<comment type="catalytic activity">
    <reaction evidence="1">
        <text>O-phospho-L-threonyl-[protein] + H2O = L-threonyl-[protein] + phosphate</text>
        <dbReference type="Rhea" id="RHEA:47004"/>
        <dbReference type="Rhea" id="RHEA-COMP:11060"/>
        <dbReference type="Rhea" id="RHEA-COMP:11605"/>
        <dbReference type="ChEBI" id="CHEBI:15377"/>
        <dbReference type="ChEBI" id="CHEBI:30013"/>
        <dbReference type="ChEBI" id="CHEBI:43474"/>
        <dbReference type="ChEBI" id="CHEBI:61977"/>
        <dbReference type="EC" id="3.1.3.16"/>
    </reaction>
</comment>
<comment type="cofactor">
    <cofactor evidence="1">
        <name>Mg(2+)</name>
        <dbReference type="ChEBI" id="CHEBI:18420"/>
    </cofactor>
</comment>
<comment type="subcellular location">
    <subcellularLocation>
        <location evidence="1">Nucleus</location>
    </subcellularLocation>
    <text evidence="1">Colocalizes with nuclear proteasomes.</text>
</comment>
<comment type="domain">
    <text evidence="1">The Ubiquitin-like domain mediates interaction with proteasomes.</text>
</comment>
<protein>
    <recommendedName>
        <fullName>Ubiquitin-like domain-containing CTD phosphatase 1</fullName>
        <ecNumber evidence="1">3.1.3.16</ecNumber>
    </recommendedName>
    <alternativeName>
        <fullName>Nuclear proteasome inhibitor UBLCP1</fullName>
    </alternativeName>
</protein>
<name>UBCP1_PONAB</name>
<gene>
    <name type="primary">UBLCP1</name>
</gene>
<keyword id="KW-0007">Acetylation</keyword>
<keyword id="KW-0378">Hydrolase</keyword>
<keyword id="KW-0460">Magnesium</keyword>
<keyword id="KW-0479">Metal-binding</keyword>
<keyword id="KW-0539">Nucleus</keyword>
<keyword id="KW-0904">Protein phosphatase</keyword>
<keyword id="KW-1185">Reference proteome</keyword>
<proteinExistence type="evidence at transcript level"/>
<reference key="1">
    <citation type="submission" date="2004-11" db="EMBL/GenBank/DDBJ databases">
        <authorList>
            <consortium name="The German cDNA consortium"/>
        </authorList>
    </citation>
    <scope>NUCLEOTIDE SEQUENCE [LARGE SCALE MRNA]</scope>
    <source>
        <tissue>Brain cortex</tissue>
    </source>
</reference>
<organism>
    <name type="scientific">Pongo abelii</name>
    <name type="common">Sumatran orangutan</name>
    <name type="synonym">Pongo pygmaeus abelii</name>
    <dbReference type="NCBI Taxonomy" id="9601"/>
    <lineage>
        <taxon>Eukaryota</taxon>
        <taxon>Metazoa</taxon>
        <taxon>Chordata</taxon>
        <taxon>Craniata</taxon>
        <taxon>Vertebrata</taxon>
        <taxon>Euteleostomi</taxon>
        <taxon>Mammalia</taxon>
        <taxon>Eutheria</taxon>
        <taxon>Euarchontoglires</taxon>
        <taxon>Primates</taxon>
        <taxon>Haplorrhini</taxon>
        <taxon>Catarrhini</taxon>
        <taxon>Hominidae</taxon>
        <taxon>Pongo</taxon>
    </lineage>
</organism>